<accession>A5GT49</accession>
<keyword id="KW-0378">Hydrolase</keyword>
<keyword id="KW-0460">Magnesium</keyword>
<keyword id="KW-1185">Reference proteome</keyword>
<evidence type="ECO:0000255" key="1">
    <source>
        <dbReference type="HAMAP-Rule" id="MF_00490"/>
    </source>
</evidence>
<reference key="1">
    <citation type="submission" date="2006-05" db="EMBL/GenBank/DDBJ databases">
        <authorList>
            <consortium name="Genoscope"/>
        </authorList>
    </citation>
    <scope>NUCLEOTIDE SEQUENCE [LARGE SCALE GENOMIC DNA]</scope>
    <source>
        <strain>RCC307</strain>
    </source>
</reference>
<name>COMB_SYNR3</name>
<sequence>MRLSYFHSPDRVPAEGMADAAVAIDVLRATTTMAWALHNGAEAIQAFADLAQLDAAASAWPDDQSLRAGERGGQKLEGFDLGNSPLAVTPERIGGRRIFMSTTNGTRALDRVRSAPMLLTAALVNRSAVAQRLLQHRPEQIWMVGSGWEGAYSLEDSLAAGALADALLEGSGASLLDLAGNDETCAAHALWQQWKDQPEALLRLASHGQRLQRLGDHDADLACCATVDSLTVVPSQDEPGVLRLS</sequence>
<gene>
    <name evidence="1" type="primary">comB</name>
    <name type="ordered locus">SynRCC307_1155</name>
</gene>
<organism>
    <name type="scientific">Synechococcus sp. (strain RCC307)</name>
    <dbReference type="NCBI Taxonomy" id="316278"/>
    <lineage>
        <taxon>Bacteria</taxon>
        <taxon>Bacillati</taxon>
        <taxon>Cyanobacteriota</taxon>
        <taxon>Cyanophyceae</taxon>
        <taxon>Synechococcales</taxon>
        <taxon>Synechococcaceae</taxon>
        <taxon>Synechococcus</taxon>
    </lineage>
</organism>
<dbReference type="EC" id="3.1.3.71" evidence="1"/>
<dbReference type="EMBL" id="CT978603">
    <property type="protein sequence ID" value="CAK28058.1"/>
    <property type="molecule type" value="Genomic_DNA"/>
</dbReference>
<dbReference type="SMR" id="A5GT49"/>
<dbReference type="STRING" id="316278.SynRCC307_1155"/>
<dbReference type="KEGG" id="syr:SynRCC307_1155"/>
<dbReference type="eggNOG" id="COG2045">
    <property type="taxonomic scope" value="Bacteria"/>
</dbReference>
<dbReference type="HOGENOM" id="CLU_070028_0_1_3"/>
<dbReference type="OrthoDB" id="4913at2"/>
<dbReference type="Proteomes" id="UP000001115">
    <property type="component" value="Chromosome"/>
</dbReference>
<dbReference type="GO" id="GO:0050532">
    <property type="term" value="F:2-phosphosulfolactate phosphatase activity"/>
    <property type="evidence" value="ECO:0007669"/>
    <property type="project" value="UniProtKB-UniRule"/>
</dbReference>
<dbReference type="GO" id="GO:0000287">
    <property type="term" value="F:magnesium ion binding"/>
    <property type="evidence" value="ECO:0007669"/>
    <property type="project" value="UniProtKB-UniRule"/>
</dbReference>
<dbReference type="GO" id="GO:0050545">
    <property type="term" value="F:sulfopyruvate decarboxylase activity"/>
    <property type="evidence" value="ECO:0007669"/>
    <property type="project" value="TreeGrafter"/>
</dbReference>
<dbReference type="FunFam" id="3.90.1560.10:FF:000001">
    <property type="entry name" value="Probable 2-phosphosulfolactate phosphatase"/>
    <property type="match status" value="1"/>
</dbReference>
<dbReference type="Gene3D" id="3.90.1560.10">
    <property type="entry name" value="ComB-like"/>
    <property type="match status" value="1"/>
</dbReference>
<dbReference type="HAMAP" id="MF_00490">
    <property type="entry name" value="ComB"/>
    <property type="match status" value="1"/>
</dbReference>
<dbReference type="InterPro" id="IPR005238">
    <property type="entry name" value="ComB-like"/>
</dbReference>
<dbReference type="InterPro" id="IPR036702">
    <property type="entry name" value="ComB-like_sf"/>
</dbReference>
<dbReference type="NCBIfam" id="NF002053">
    <property type="entry name" value="PRK00886.1-2"/>
    <property type="match status" value="1"/>
</dbReference>
<dbReference type="NCBIfam" id="NF002056">
    <property type="entry name" value="PRK00886.1-5"/>
    <property type="match status" value="1"/>
</dbReference>
<dbReference type="PANTHER" id="PTHR37311">
    <property type="entry name" value="2-PHOSPHOSULFOLACTATE PHOSPHATASE-RELATED"/>
    <property type="match status" value="1"/>
</dbReference>
<dbReference type="PANTHER" id="PTHR37311:SF1">
    <property type="entry name" value="2-PHOSPHOSULFOLACTATE PHOSPHATASE-RELATED"/>
    <property type="match status" value="1"/>
</dbReference>
<dbReference type="Pfam" id="PF04029">
    <property type="entry name" value="2-ph_phosp"/>
    <property type="match status" value="1"/>
</dbReference>
<dbReference type="SUPFAM" id="SSF142823">
    <property type="entry name" value="ComB-like"/>
    <property type="match status" value="1"/>
</dbReference>
<protein>
    <recommendedName>
        <fullName evidence="1">Probable 2-phosphosulfolactate phosphatase</fullName>
        <ecNumber evidence="1">3.1.3.71</ecNumber>
    </recommendedName>
</protein>
<proteinExistence type="inferred from homology"/>
<comment type="catalytic activity">
    <reaction evidence="1">
        <text>(2R)-O-phospho-3-sulfolactate + H2O = (2R)-3-sulfolactate + phosphate</text>
        <dbReference type="Rhea" id="RHEA:23416"/>
        <dbReference type="ChEBI" id="CHEBI:15377"/>
        <dbReference type="ChEBI" id="CHEBI:15597"/>
        <dbReference type="ChEBI" id="CHEBI:43474"/>
        <dbReference type="ChEBI" id="CHEBI:58738"/>
        <dbReference type="EC" id="3.1.3.71"/>
    </reaction>
</comment>
<comment type="cofactor">
    <cofactor evidence="1">
        <name>Mg(2+)</name>
        <dbReference type="ChEBI" id="CHEBI:18420"/>
    </cofactor>
</comment>
<comment type="similarity">
    <text evidence="1">Belongs to the ComB family.</text>
</comment>
<feature type="chain" id="PRO_1000014472" description="Probable 2-phosphosulfolactate phosphatase">
    <location>
        <begin position="1"/>
        <end position="245"/>
    </location>
</feature>